<keyword id="KW-0963">Cytoplasm</keyword>
<keyword id="KW-0227">DNA damage</keyword>
<keyword id="KW-0228">DNA excision</keyword>
<keyword id="KW-0234">DNA repair</keyword>
<keyword id="KW-0267">Excision nuclease</keyword>
<keyword id="KW-1185">Reference proteome</keyword>
<keyword id="KW-0742">SOS response</keyword>
<feature type="chain" id="PRO_1000099509" description="UvrABC system protein C">
    <location>
        <begin position="1"/>
        <end position="610"/>
    </location>
</feature>
<feature type="domain" description="GIY-YIG" evidence="1">
    <location>
        <begin position="16"/>
        <end position="94"/>
    </location>
</feature>
<feature type="domain" description="UVR" evidence="1">
    <location>
        <begin position="204"/>
        <end position="239"/>
    </location>
</feature>
<evidence type="ECO:0000255" key="1">
    <source>
        <dbReference type="HAMAP-Rule" id="MF_00203"/>
    </source>
</evidence>
<organism>
    <name type="scientific">Proteus mirabilis (strain HI4320)</name>
    <dbReference type="NCBI Taxonomy" id="529507"/>
    <lineage>
        <taxon>Bacteria</taxon>
        <taxon>Pseudomonadati</taxon>
        <taxon>Pseudomonadota</taxon>
        <taxon>Gammaproteobacteria</taxon>
        <taxon>Enterobacterales</taxon>
        <taxon>Morganellaceae</taxon>
        <taxon>Proteus</taxon>
    </lineage>
</organism>
<accession>B4EXV4</accession>
<name>UVRC_PROMH</name>
<dbReference type="EMBL" id="AM942759">
    <property type="protein sequence ID" value="CAR43195.1"/>
    <property type="molecule type" value="Genomic_DNA"/>
</dbReference>
<dbReference type="RefSeq" id="WP_004243286.1">
    <property type="nucleotide sequence ID" value="NC_010554.1"/>
</dbReference>
<dbReference type="SMR" id="B4EXV4"/>
<dbReference type="EnsemblBacteria" id="CAR43195">
    <property type="protein sequence ID" value="CAR43195"/>
    <property type="gene ID" value="PMI1521"/>
</dbReference>
<dbReference type="GeneID" id="6801428"/>
<dbReference type="KEGG" id="pmr:PMI1521"/>
<dbReference type="eggNOG" id="COG0322">
    <property type="taxonomic scope" value="Bacteria"/>
</dbReference>
<dbReference type="HOGENOM" id="CLU_014841_3_2_6"/>
<dbReference type="Proteomes" id="UP000008319">
    <property type="component" value="Chromosome"/>
</dbReference>
<dbReference type="GO" id="GO:0005737">
    <property type="term" value="C:cytoplasm"/>
    <property type="evidence" value="ECO:0007669"/>
    <property type="project" value="UniProtKB-SubCell"/>
</dbReference>
<dbReference type="GO" id="GO:0009380">
    <property type="term" value="C:excinuclease repair complex"/>
    <property type="evidence" value="ECO:0007669"/>
    <property type="project" value="InterPro"/>
</dbReference>
<dbReference type="GO" id="GO:0003677">
    <property type="term" value="F:DNA binding"/>
    <property type="evidence" value="ECO:0007669"/>
    <property type="project" value="UniProtKB-UniRule"/>
</dbReference>
<dbReference type="GO" id="GO:0009381">
    <property type="term" value="F:excinuclease ABC activity"/>
    <property type="evidence" value="ECO:0007669"/>
    <property type="project" value="UniProtKB-UniRule"/>
</dbReference>
<dbReference type="GO" id="GO:0006289">
    <property type="term" value="P:nucleotide-excision repair"/>
    <property type="evidence" value="ECO:0007669"/>
    <property type="project" value="UniProtKB-UniRule"/>
</dbReference>
<dbReference type="GO" id="GO:0009432">
    <property type="term" value="P:SOS response"/>
    <property type="evidence" value="ECO:0007669"/>
    <property type="project" value="UniProtKB-UniRule"/>
</dbReference>
<dbReference type="CDD" id="cd10434">
    <property type="entry name" value="GIY-YIG_UvrC_Cho"/>
    <property type="match status" value="1"/>
</dbReference>
<dbReference type="FunFam" id="1.10.150.20:FF:000005">
    <property type="entry name" value="UvrABC system protein C"/>
    <property type="match status" value="1"/>
</dbReference>
<dbReference type="FunFam" id="3.30.420.340:FF:000001">
    <property type="entry name" value="UvrABC system protein C"/>
    <property type="match status" value="1"/>
</dbReference>
<dbReference type="FunFam" id="3.40.1440.10:FF:000001">
    <property type="entry name" value="UvrABC system protein C"/>
    <property type="match status" value="1"/>
</dbReference>
<dbReference type="FunFam" id="4.10.860.10:FF:000002">
    <property type="entry name" value="UvrABC system protein C"/>
    <property type="match status" value="1"/>
</dbReference>
<dbReference type="Gene3D" id="1.10.150.20">
    <property type="entry name" value="5' to 3' exonuclease, C-terminal subdomain"/>
    <property type="match status" value="1"/>
</dbReference>
<dbReference type="Gene3D" id="3.40.1440.10">
    <property type="entry name" value="GIY-YIG endonuclease"/>
    <property type="match status" value="1"/>
</dbReference>
<dbReference type="Gene3D" id="4.10.860.10">
    <property type="entry name" value="UVR domain"/>
    <property type="match status" value="1"/>
</dbReference>
<dbReference type="Gene3D" id="3.30.420.340">
    <property type="entry name" value="UvrC, RNAse H endonuclease domain"/>
    <property type="match status" value="1"/>
</dbReference>
<dbReference type="HAMAP" id="MF_00203">
    <property type="entry name" value="UvrC"/>
    <property type="match status" value="1"/>
</dbReference>
<dbReference type="InterPro" id="IPR000305">
    <property type="entry name" value="GIY-YIG_endonuc"/>
</dbReference>
<dbReference type="InterPro" id="IPR035901">
    <property type="entry name" value="GIY-YIG_endonuc_sf"/>
</dbReference>
<dbReference type="InterPro" id="IPR047296">
    <property type="entry name" value="GIY-YIG_UvrC_Cho"/>
</dbReference>
<dbReference type="InterPro" id="IPR003583">
    <property type="entry name" value="Hlx-hairpin-Hlx_DNA-bd_motif"/>
</dbReference>
<dbReference type="InterPro" id="IPR010994">
    <property type="entry name" value="RuvA_2-like"/>
</dbReference>
<dbReference type="InterPro" id="IPR001943">
    <property type="entry name" value="UVR_dom"/>
</dbReference>
<dbReference type="InterPro" id="IPR036876">
    <property type="entry name" value="UVR_dom_sf"/>
</dbReference>
<dbReference type="InterPro" id="IPR050066">
    <property type="entry name" value="UvrABC_protein_C"/>
</dbReference>
<dbReference type="InterPro" id="IPR004791">
    <property type="entry name" value="UvrC"/>
</dbReference>
<dbReference type="InterPro" id="IPR001162">
    <property type="entry name" value="UvrC_RNase_H_dom"/>
</dbReference>
<dbReference type="InterPro" id="IPR038476">
    <property type="entry name" value="UvrC_RNase_H_dom_sf"/>
</dbReference>
<dbReference type="NCBIfam" id="NF001824">
    <property type="entry name" value="PRK00558.1-5"/>
    <property type="match status" value="1"/>
</dbReference>
<dbReference type="NCBIfam" id="TIGR00194">
    <property type="entry name" value="uvrC"/>
    <property type="match status" value="1"/>
</dbReference>
<dbReference type="PANTHER" id="PTHR30562:SF1">
    <property type="entry name" value="UVRABC SYSTEM PROTEIN C"/>
    <property type="match status" value="1"/>
</dbReference>
<dbReference type="PANTHER" id="PTHR30562">
    <property type="entry name" value="UVRC/OXIDOREDUCTASE"/>
    <property type="match status" value="1"/>
</dbReference>
<dbReference type="Pfam" id="PF01541">
    <property type="entry name" value="GIY-YIG"/>
    <property type="match status" value="1"/>
</dbReference>
<dbReference type="Pfam" id="PF14520">
    <property type="entry name" value="HHH_5"/>
    <property type="match status" value="1"/>
</dbReference>
<dbReference type="Pfam" id="PF02151">
    <property type="entry name" value="UVR"/>
    <property type="match status" value="1"/>
</dbReference>
<dbReference type="Pfam" id="PF22920">
    <property type="entry name" value="UvrC_RNaseH"/>
    <property type="match status" value="1"/>
</dbReference>
<dbReference type="Pfam" id="PF08459">
    <property type="entry name" value="UvrC_RNaseH_dom"/>
    <property type="match status" value="1"/>
</dbReference>
<dbReference type="SMART" id="SM00465">
    <property type="entry name" value="GIYc"/>
    <property type="match status" value="1"/>
</dbReference>
<dbReference type="SMART" id="SM00278">
    <property type="entry name" value="HhH1"/>
    <property type="match status" value="2"/>
</dbReference>
<dbReference type="SUPFAM" id="SSF46600">
    <property type="entry name" value="C-terminal UvrC-binding domain of UvrB"/>
    <property type="match status" value="1"/>
</dbReference>
<dbReference type="SUPFAM" id="SSF82771">
    <property type="entry name" value="GIY-YIG endonuclease"/>
    <property type="match status" value="1"/>
</dbReference>
<dbReference type="SUPFAM" id="SSF47781">
    <property type="entry name" value="RuvA domain 2-like"/>
    <property type="match status" value="1"/>
</dbReference>
<dbReference type="PROSITE" id="PS50164">
    <property type="entry name" value="GIY_YIG"/>
    <property type="match status" value="1"/>
</dbReference>
<dbReference type="PROSITE" id="PS50151">
    <property type="entry name" value="UVR"/>
    <property type="match status" value="1"/>
</dbReference>
<dbReference type="PROSITE" id="PS50165">
    <property type="entry name" value="UVRC"/>
    <property type="match status" value="1"/>
</dbReference>
<protein>
    <recommendedName>
        <fullName evidence="1">UvrABC system protein C</fullName>
        <shortName evidence="1">Protein UvrC</shortName>
    </recommendedName>
    <alternativeName>
        <fullName evidence="1">Excinuclease ABC subunit C</fullName>
    </alternativeName>
</protein>
<sequence length="610" mass="68751">MENIFDAKAFLSRVTSQPGVYRMYDASGTVIYVGKAKDLKKRLSSYFRAQVNSRKTEALVKCIANIDVTVTHTETEALLLEHSYIQRYQPRYNVLLRDDKSYPYIYLSADKHPRLASYRGAKHAKGEYFGPFPNSLAVRETLALMQKLFPIRQCEDSVYRNRSRPCLQYQIGRCLAPCVKGYVSDEEYAQQVNYVRLFLSGDDSQVIEGLIKRMEEASQALRFEEAARIRDQIHAVRQVTEKQFVANIGDDLDVISVAFNGAIACVYVLFFRQGKVLGSRSYFPKVPANTSLDEVVQTFIGQFYLQGSAIRTLPTEILLDFNLEDKTILAESISSIAGRKIHIQTKPRGDRARYLKLARTNAATALATKQVEQSTISQRYNSLMSLLEMKEIKRMECFDISHTMGEQTVASCVVFDMNGPLKSEYRRYNISGITPGDDYAAMNQVLTRRYGKSLEESKIPDIIFIDGGKGQLAQAIDVFQSLDVDWDKSHPKLIGVAKGSDRKAGLETLFFKPEGEGVALPSDSPALHLIQHIRDESHRHAITGHRQRRAKVKNTSSLESIEGVGPKRRQMLLKYMGGLQALRDASVEEIAKVPTISTALAEKIFNALKH</sequence>
<comment type="function">
    <text evidence="1">The UvrABC repair system catalyzes the recognition and processing of DNA lesions. UvrC both incises the 5' and 3' sides of the lesion. The N-terminal half is responsible for the 3' incision and the C-terminal half is responsible for the 5' incision.</text>
</comment>
<comment type="subunit">
    <text evidence="1">Interacts with UvrB in an incision complex.</text>
</comment>
<comment type="subcellular location">
    <subcellularLocation>
        <location evidence="1">Cytoplasm</location>
    </subcellularLocation>
</comment>
<comment type="similarity">
    <text evidence="1">Belongs to the UvrC family.</text>
</comment>
<reference key="1">
    <citation type="journal article" date="2008" name="J. Bacteriol.">
        <title>Complete genome sequence of uropathogenic Proteus mirabilis, a master of both adherence and motility.</title>
        <authorList>
            <person name="Pearson M.M."/>
            <person name="Sebaihia M."/>
            <person name="Churcher C."/>
            <person name="Quail M.A."/>
            <person name="Seshasayee A.S."/>
            <person name="Luscombe N.M."/>
            <person name="Abdellah Z."/>
            <person name="Arrosmith C."/>
            <person name="Atkin B."/>
            <person name="Chillingworth T."/>
            <person name="Hauser H."/>
            <person name="Jagels K."/>
            <person name="Moule S."/>
            <person name="Mungall K."/>
            <person name="Norbertczak H."/>
            <person name="Rabbinowitsch E."/>
            <person name="Walker D."/>
            <person name="Whithead S."/>
            <person name="Thomson N.R."/>
            <person name="Rather P.N."/>
            <person name="Parkhill J."/>
            <person name="Mobley H.L.T."/>
        </authorList>
    </citation>
    <scope>NUCLEOTIDE SEQUENCE [LARGE SCALE GENOMIC DNA]</scope>
    <source>
        <strain>HI4320</strain>
    </source>
</reference>
<proteinExistence type="inferred from homology"/>
<gene>
    <name evidence="1" type="primary">uvrC</name>
    <name type="ordered locus">PMI1521</name>
</gene>